<accession>Q6EW16</accession>
<feature type="chain" id="PRO_0000126580" description="Small ribosomal subunit protein uS8c">
    <location>
        <begin position="1"/>
        <end position="132"/>
    </location>
</feature>
<dbReference type="EMBL" id="AJ627251">
    <property type="protein sequence ID" value="CAF28630.1"/>
    <property type="molecule type" value="Genomic_DNA"/>
</dbReference>
<dbReference type="RefSeq" id="YP_053190.1">
    <property type="nucleotide sequence ID" value="NC_006050.1"/>
</dbReference>
<dbReference type="SMR" id="Q6EW16"/>
<dbReference type="GeneID" id="2896218"/>
<dbReference type="GO" id="GO:0009507">
    <property type="term" value="C:chloroplast"/>
    <property type="evidence" value="ECO:0007669"/>
    <property type="project" value="UniProtKB-SubCell"/>
</dbReference>
<dbReference type="GO" id="GO:1990904">
    <property type="term" value="C:ribonucleoprotein complex"/>
    <property type="evidence" value="ECO:0007669"/>
    <property type="project" value="UniProtKB-KW"/>
</dbReference>
<dbReference type="GO" id="GO:0005840">
    <property type="term" value="C:ribosome"/>
    <property type="evidence" value="ECO:0007669"/>
    <property type="project" value="UniProtKB-KW"/>
</dbReference>
<dbReference type="GO" id="GO:0019843">
    <property type="term" value="F:rRNA binding"/>
    <property type="evidence" value="ECO:0007669"/>
    <property type="project" value="UniProtKB-UniRule"/>
</dbReference>
<dbReference type="GO" id="GO:0003735">
    <property type="term" value="F:structural constituent of ribosome"/>
    <property type="evidence" value="ECO:0007669"/>
    <property type="project" value="InterPro"/>
</dbReference>
<dbReference type="GO" id="GO:0006412">
    <property type="term" value="P:translation"/>
    <property type="evidence" value="ECO:0007669"/>
    <property type="project" value="UniProtKB-UniRule"/>
</dbReference>
<dbReference type="FunFam" id="3.30.1490.10:FF:000001">
    <property type="entry name" value="30S ribosomal protein S8"/>
    <property type="match status" value="1"/>
</dbReference>
<dbReference type="FunFam" id="3.30.1370.30:FF:000004">
    <property type="entry name" value="30S ribosomal protein S8, chloroplastic"/>
    <property type="match status" value="1"/>
</dbReference>
<dbReference type="Gene3D" id="3.30.1370.30">
    <property type="match status" value="1"/>
</dbReference>
<dbReference type="Gene3D" id="3.30.1490.10">
    <property type="match status" value="1"/>
</dbReference>
<dbReference type="HAMAP" id="MF_01302_B">
    <property type="entry name" value="Ribosomal_uS8_B"/>
    <property type="match status" value="1"/>
</dbReference>
<dbReference type="InterPro" id="IPR000630">
    <property type="entry name" value="Ribosomal_uS8"/>
</dbReference>
<dbReference type="InterPro" id="IPR047863">
    <property type="entry name" value="Ribosomal_uS8_CS"/>
</dbReference>
<dbReference type="InterPro" id="IPR035987">
    <property type="entry name" value="Ribosomal_uS8_sf"/>
</dbReference>
<dbReference type="NCBIfam" id="NF001109">
    <property type="entry name" value="PRK00136.1"/>
    <property type="match status" value="1"/>
</dbReference>
<dbReference type="PANTHER" id="PTHR11758">
    <property type="entry name" value="40S RIBOSOMAL PROTEIN S15A"/>
    <property type="match status" value="1"/>
</dbReference>
<dbReference type="Pfam" id="PF00410">
    <property type="entry name" value="Ribosomal_S8"/>
    <property type="match status" value="1"/>
</dbReference>
<dbReference type="SUPFAM" id="SSF56047">
    <property type="entry name" value="Ribosomal protein S8"/>
    <property type="match status" value="1"/>
</dbReference>
<dbReference type="PROSITE" id="PS00053">
    <property type="entry name" value="RIBOSOMAL_S8"/>
    <property type="match status" value="1"/>
</dbReference>
<name>RR8_NYMAL</name>
<keyword id="KW-0150">Chloroplast</keyword>
<keyword id="KW-0934">Plastid</keyword>
<keyword id="KW-0687">Ribonucleoprotein</keyword>
<keyword id="KW-0689">Ribosomal protein</keyword>
<keyword id="KW-0694">RNA-binding</keyword>
<keyword id="KW-0699">rRNA-binding</keyword>
<protein>
    <recommendedName>
        <fullName evidence="2">Small ribosomal subunit protein uS8c</fullName>
    </recommendedName>
    <alternativeName>
        <fullName>30S ribosomal protein S8, chloroplastic</fullName>
    </alternativeName>
</protein>
<proteinExistence type="inferred from homology"/>
<gene>
    <name type="primary">rps8</name>
</gene>
<comment type="function">
    <text evidence="1">One of the primary rRNA binding proteins, it binds directly to 16S rRNA central domain where it helps coordinate assembly of the platform of the 30S subunit.</text>
</comment>
<comment type="subunit">
    <text evidence="1">Part of the 30S ribosomal subunit.</text>
</comment>
<comment type="subcellular location">
    <subcellularLocation>
        <location>Plastid</location>
        <location>Chloroplast</location>
    </subcellularLocation>
</comment>
<comment type="similarity">
    <text evidence="2">Belongs to the universal ribosomal protein uS8 family.</text>
</comment>
<evidence type="ECO:0000250" key="1"/>
<evidence type="ECO:0000305" key="2"/>
<geneLocation type="chloroplast"/>
<reference key="1">
    <citation type="journal article" date="2004" name="Mol. Biol. Evol.">
        <title>The chloroplast genome of Nymphaea alba: whole-genome analyses and the problem of identifying the most basal angiosperm.</title>
        <authorList>
            <person name="Goremykin V.V."/>
            <person name="Hirsch-Ernst K.I."/>
            <person name="Woelfl S."/>
            <person name="Hellwig F.H."/>
        </authorList>
    </citation>
    <scope>NUCLEOTIDE SEQUENCE [LARGE SCALE GENOMIC DNA]</scope>
</reference>
<sequence>MGRDTIADIITYIRNADMDKKGTVRIPSTNITENIVKILLREGFIENVRKHRENNKDFLVLTLRHRRNRKRAYRNILKRISRPGLRIYSNSQRIPRISGGIGVVILSTSRGIMTDREARLERIGGEILFYIW</sequence>
<organism>
    <name type="scientific">Nymphaea alba</name>
    <name type="common">White water-lily</name>
    <name type="synonym">Castalia alba</name>
    <dbReference type="NCBI Taxonomy" id="34301"/>
    <lineage>
        <taxon>Eukaryota</taxon>
        <taxon>Viridiplantae</taxon>
        <taxon>Streptophyta</taxon>
        <taxon>Embryophyta</taxon>
        <taxon>Tracheophyta</taxon>
        <taxon>Spermatophyta</taxon>
        <taxon>Magnoliopsida</taxon>
        <taxon>Nymphaeales</taxon>
        <taxon>Nymphaeaceae</taxon>
        <taxon>Nymphaea</taxon>
    </lineage>
</organism>